<proteinExistence type="inferred from homology"/>
<sequence>MDIIFYHPTFDTQWWIEALHKAIPQARVRAWKSGDNESADYALVWHPPVEMLAGRDLKAVFALGAGVDSILSKLQAHPEMLKPSVPLFRLEDTGMGEQMQEYAVSQVLHWFRRFDDYRIQQNSSHWQPLPEYHREDFTIGILGAGVLGSKVAQSLQTWRFPLRCWSRTRKSWPGLQSFAGREELSAFLSQCRVLINLLPNTPETVGIINQQLLEKLPDGAYLLNLARGVHVVEDDLLAALDSGKVKGAMLDVFNREPLPPESPLWQHPRVTITPHVAAITRPAEAVDYISRTIAQLEKGERVCGQVDRARGY</sequence>
<evidence type="ECO:0000255" key="1">
    <source>
        <dbReference type="HAMAP-Rule" id="MF_01666"/>
    </source>
</evidence>
<protein>
    <recommendedName>
        <fullName evidence="1">Glyoxylate/hydroxypyruvate reductase A</fullName>
        <ecNumber evidence="1">1.1.1.79</ecNumber>
        <ecNumber evidence="1">1.1.1.81</ecNumber>
    </recommendedName>
    <alternativeName>
        <fullName evidence="1">2-ketoacid reductase</fullName>
    </alternativeName>
</protein>
<comment type="function">
    <text evidence="1">Catalyzes the NADPH-dependent reduction of glyoxylate and hydroxypyruvate into glycolate and glycerate, respectively.</text>
</comment>
<comment type="catalytic activity">
    <reaction evidence="1">
        <text>glycolate + NADP(+) = glyoxylate + NADPH + H(+)</text>
        <dbReference type="Rhea" id="RHEA:10992"/>
        <dbReference type="ChEBI" id="CHEBI:15378"/>
        <dbReference type="ChEBI" id="CHEBI:29805"/>
        <dbReference type="ChEBI" id="CHEBI:36655"/>
        <dbReference type="ChEBI" id="CHEBI:57783"/>
        <dbReference type="ChEBI" id="CHEBI:58349"/>
        <dbReference type="EC" id="1.1.1.79"/>
    </reaction>
</comment>
<comment type="catalytic activity">
    <reaction evidence="1">
        <text>(R)-glycerate + NAD(+) = 3-hydroxypyruvate + NADH + H(+)</text>
        <dbReference type="Rhea" id="RHEA:17905"/>
        <dbReference type="ChEBI" id="CHEBI:15378"/>
        <dbReference type="ChEBI" id="CHEBI:16659"/>
        <dbReference type="ChEBI" id="CHEBI:17180"/>
        <dbReference type="ChEBI" id="CHEBI:57540"/>
        <dbReference type="ChEBI" id="CHEBI:57945"/>
        <dbReference type="EC" id="1.1.1.81"/>
    </reaction>
</comment>
<comment type="catalytic activity">
    <reaction evidence="1">
        <text>(R)-glycerate + NADP(+) = 3-hydroxypyruvate + NADPH + H(+)</text>
        <dbReference type="Rhea" id="RHEA:18657"/>
        <dbReference type="ChEBI" id="CHEBI:15378"/>
        <dbReference type="ChEBI" id="CHEBI:16659"/>
        <dbReference type="ChEBI" id="CHEBI:17180"/>
        <dbReference type="ChEBI" id="CHEBI:57783"/>
        <dbReference type="ChEBI" id="CHEBI:58349"/>
        <dbReference type="EC" id="1.1.1.81"/>
    </reaction>
</comment>
<comment type="subcellular location">
    <subcellularLocation>
        <location evidence="1">Cytoplasm</location>
    </subcellularLocation>
</comment>
<comment type="similarity">
    <text evidence="1">Belongs to the D-isomer specific 2-hydroxyacid dehydrogenase family. GhrA subfamily.</text>
</comment>
<dbReference type="EC" id="1.1.1.79" evidence="1"/>
<dbReference type="EC" id="1.1.1.81" evidence="1"/>
<dbReference type="EMBL" id="CU928162">
    <property type="protein sequence ID" value="CAR07378.1"/>
    <property type="molecule type" value="Genomic_DNA"/>
</dbReference>
<dbReference type="RefSeq" id="WP_000351276.1">
    <property type="nucleotide sequence ID" value="NC_011745.1"/>
</dbReference>
<dbReference type="SMR" id="B7MTG4"/>
<dbReference type="KEGG" id="ecq:ECED1_1177"/>
<dbReference type="HOGENOM" id="CLU_019796_1_0_6"/>
<dbReference type="Proteomes" id="UP000000748">
    <property type="component" value="Chromosome"/>
</dbReference>
<dbReference type="GO" id="GO:0005829">
    <property type="term" value="C:cytosol"/>
    <property type="evidence" value="ECO:0007669"/>
    <property type="project" value="UniProtKB-ARBA"/>
</dbReference>
<dbReference type="GO" id="GO:0030267">
    <property type="term" value="F:glyoxylate reductase (NADPH) activity"/>
    <property type="evidence" value="ECO:0007669"/>
    <property type="project" value="UniProtKB-UniRule"/>
</dbReference>
<dbReference type="GO" id="GO:0008465">
    <property type="term" value="F:hydroxypyruvate reductase (NADH) activity"/>
    <property type="evidence" value="ECO:0007669"/>
    <property type="project" value="RHEA"/>
</dbReference>
<dbReference type="GO" id="GO:0120509">
    <property type="term" value="F:hydroxypyruvate reductase (NADPH) activity"/>
    <property type="evidence" value="ECO:0007669"/>
    <property type="project" value="RHEA"/>
</dbReference>
<dbReference type="GO" id="GO:0051287">
    <property type="term" value="F:NAD binding"/>
    <property type="evidence" value="ECO:0007669"/>
    <property type="project" value="InterPro"/>
</dbReference>
<dbReference type="CDD" id="cd12164">
    <property type="entry name" value="GDH_like_2"/>
    <property type="match status" value="1"/>
</dbReference>
<dbReference type="FunFam" id="3.40.50.720:FF:000110">
    <property type="entry name" value="Glyoxylate/hydroxypyruvate reductase A"/>
    <property type="match status" value="1"/>
</dbReference>
<dbReference type="Gene3D" id="3.40.50.720">
    <property type="entry name" value="NAD(P)-binding Rossmann-like Domain"/>
    <property type="match status" value="2"/>
</dbReference>
<dbReference type="HAMAP" id="MF_01666">
    <property type="entry name" value="2_Hacid_dh_C_GhrA"/>
    <property type="match status" value="1"/>
</dbReference>
<dbReference type="InterPro" id="IPR029753">
    <property type="entry name" value="D-isomer_DH_CS"/>
</dbReference>
<dbReference type="InterPro" id="IPR006140">
    <property type="entry name" value="D-isomer_DH_NAD-bd"/>
</dbReference>
<dbReference type="InterPro" id="IPR023514">
    <property type="entry name" value="GhrA_Enterobacterales"/>
</dbReference>
<dbReference type="InterPro" id="IPR036291">
    <property type="entry name" value="NAD(P)-bd_dom_sf"/>
</dbReference>
<dbReference type="NCBIfam" id="NF012013">
    <property type="entry name" value="PRK15469.1"/>
    <property type="match status" value="1"/>
</dbReference>
<dbReference type="PANTHER" id="PTHR43333">
    <property type="entry name" value="2-HACID_DH_C DOMAIN-CONTAINING PROTEIN"/>
    <property type="match status" value="1"/>
</dbReference>
<dbReference type="PANTHER" id="PTHR43333:SF1">
    <property type="entry name" value="D-ISOMER SPECIFIC 2-HYDROXYACID DEHYDROGENASE NAD-BINDING DOMAIN-CONTAINING PROTEIN"/>
    <property type="match status" value="1"/>
</dbReference>
<dbReference type="Pfam" id="PF02826">
    <property type="entry name" value="2-Hacid_dh_C"/>
    <property type="match status" value="1"/>
</dbReference>
<dbReference type="SUPFAM" id="SSF51735">
    <property type="entry name" value="NAD(P)-binding Rossmann-fold domains"/>
    <property type="match status" value="1"/>
</dbReference>
<dbReference type="PROSITE" id="PS00671">
    <property type="entry name" value="D_2_HYDROXYACID_DH_3"/>
    <property type="match status" value="1"/>
</dbReference>
<keyword id="KW-0963">Cytoplasm</keyword>
<keyword id="KW-0520">NAD</keyword>
<keyword id="KW-0521">NADP</keyword>
<keyword id="KW-0560">Oxidoreductase</keyword>
<name>GHRA_ECO81</name>
<gene>
    <name evidence="1" type="primary">ghrA</name>
    <name type="ordered locus">ECED1_1177</name>
</gene>
<accession>B7MTG4</accession>
<feature type="chain" id="PRO_1000187267" description="Glyoxylate/hydroxypyruvate reductase A">
    <location>
        <begin position="1"/>
        <end position="312"/>
    </location>
</feature>
<feature type="active site" evidence="1">
    <location>
        <position position="227"/>
    </location>
</feature>
<feature type="active site" description="Proton donor" evidence="1">
    <location>
        <position position="275"/>
    </location>
</feature>
<reference key="1">
    <citation type="journal article" date="2009" name="PLoS Genet.">
        <title>Organised genome dynamics in the Escherichia coli species results in highly diverse adaptive paths.</title>
        <authorList>
            <person name="Touchon M."/>
            <person name="Hoede C."/>
            <person name="Tenaillon O."/>
            <person name="Barbe V."/>
            <person name="Baeriswyl S."/>
            <person name="Bidet P."/>
            <person name="Bingen E."/>
            <person name="Bonacorsi S."/>
            <person name="Bouchier C."/>
            <person name="Bouvet O."/>
            <person name="Calteau A."/>
            <person name="Chiapello H."/>
            <person name="Clermont O."/>
            <person name="Cruveiller S."/>
            <person name="Danchin A."/>
            <person name="Diard M."/>
            <person name="Dossat C."/>
            <person name="Karoui M.E."/>
            <person name="Frapy E."/>
            <person name="Garry L."/>
            <person name="Ghigo J.M."/>
            <person name="Gilles A.M."/>
            <person name="Johnson J."/>
            <person name="Le Bouguenec C."/>
            <person name="Lescat M."/>
            <person name="Mangenot S."/>
            <person name="Martinez-Jehanne V."/>
            <person name="Matic I."/>
            <person name="Nassif X."/>
            <person name="Oztas S."/>
            <person name="Petit M.A."/>
            <person name="Pichon C."/>
            <person name="Rouy Z."/>
            <person name="Ruf C.S."/>
            <person name="Schneider D."/>
            <person name="Tourret J."/>
            <person name="Vacherie B."/>
            <person name="Vallenet D."/>
            <person name="Medigue C."/>
            <person name="Rocha E.P.C."/>
            <person name="Denamur E."/>
        </authorList>
    </citation>
    <scope>NUCLEOTIDE SEQUENCE [LARGE SCALE GENOMIC DNA]</scope>
    <source>
        <strain>ED1a</strain>
    </source>
</reference>
<organism>
    <name type="scientific">Escherichia coli O81 (strain ED1a)</name>
    <dbReference type="NCBI Taxonomy" id="585397"/>
    <lineage>
        <taxon>Bacteria</taxon>
        <taxon>Pseudomonadati</taxon>
        <taxon>Pseudomonadota</taxon>
        <taxon>Gammaproteobacteria</taxon>
        <taxon>Enterobacterales</taxon>
        <taxon>Enterobacteriaceae</taxon>
        <taxon>Escherichia</taxon>
    </lineage>
</organism>